<accession>Q5N0F0</accession>
<evidence type="ECO:0000255" key="1">
    <source>
        <dbReference type="HAMAP-Rule" id="MF_00060"/>
    </source>
</evidence>
<reference key="1">
    <citation type="journal article" date="2007" name="Photosyn. Res.">
        <title>Complete nucleotide sequence of the freshwater unicellular cyanobacterium Synechococcus elongatus PCC 6301 chromosome: gene content and organization.</title>
        <authorList>
            <person name="Sugita C."/>
            <person name="Ogata K."/>
            <person name="Shikata M."/>
            <person name="Jikuya H."/>
            <person name="Takano J."/>
            <person name="Furumichi M."/>
            <person name="Kanehisa M."/>
            <person name="Omata T."/>
            <person name="Sugiura M."/>
            <person name="Sugita M."/>
        </authorList>
    </citation>
    <scope>NUCLEOTIDE SEQUENCE [LARGE SCALE GENOMIC DNA]</scope>
    <source>
        <strain>ATCC 27144 / PCC 6301 / SAUG 1402/1</strain>
    </source>
</reference>
<keyword id="KW-0963">Cytoplasm</keyword>
<keyword id="KW-0378">Hydrolase</keyword>
<keyword id="KW-0479">Metal-binding</keyword>
<keyword id="KW-0547">Nucleotide-binding</keyword>
<proteinExistence type="inferred from homology"/>
<comment type="function">
    <text evidence="1">Nucleotidase that shows phosphatase activity on nucleoside 5'-monophosphates.</text>
</comment>
<comment type="catalytic activity">
    <reaction evidence="1">
        <text>a ribonucleoside 5'-phosphate + H2O = a ribonucleoside + phosphate</text>
        <dbReference type="Rhea" id="RHEA:12484"/>
        <dbReference type="ChEBI" id="CHEBI:15377"/>
        <dbReference type="ChEBI" id="CHEBI:18254"/>
        <dbReference type="ChEBI" id="CHEBI:43474"/>
        <dbReference type="ChEBI" id="CHEBI:58043"/>
        <dbReference type="EC" id="3.1.3.5"/>
    </reaction>
</comment>
<comment type="cofactor">
    <cofactor evidence="1">
        <name>a divalent metal cation</name>
        <dbReference type="ChEBI" id="CHEBI:60240"/>
    </cofactor>
    <text evidence="1">Binds 1 divalent metal cation per subunit.</text>
</comment>
<comment type="subcellular location">
    <subcellularLocation>
        <location evidence="1">Cytoplasm</location>
    </subcellularLocation>
</comment>
<comment type="similarity">
    <text evidence="1">Belongs to the SurE nucleotidase family.</text>
</comment>
<organism>
    <name type="scientific">Synechococcus sp. (strain ATCC 27144 / PCC 6301 / SAUG 1402/1)</name>
    <name type="common">Anacystis nidulans</name>
    <dbReference type="NCBI Taxonomy" id="269084"/>
    <lineage>
        <taxon>Bacteria</taxon>
        <taxon>Bacillati</taxon>
        <taxon>Cyanobacteriota</taxon>
        <taxon>Cyanophyceae</taxon>
        <taxon>Synechococcales</taxon>
        <taxon>Synechococcaceae</taxon>
        <taxon>Synechococcus</taxon>
    </lineage>
</organism>
<protein>
    <recommendedName>
        <fullName evidence="1">5'-nucleotidase SurE</fullName>
        <ecNumber evidence="1">3.1.3.5</ecNumber>
    </recommendedName>
    <alternativeName>
        <fullName evidence="1">Nucleoside 5'-monophosphate phosphohydrolase</fullName>
    </alternativeName>
</protein>
<name>SURE_SYNP6</name>
<gene>
    <name evidence="1" type="primary">surE</name>
    <name type="ordered locus">syc2030_d</name>
</gene>
<feature type="chain" id="PRO_0000235657" description="5'-nucleotidase SurE">
    <location>
        <begin position="1"/>
        <end position="258"/>
    </location>
</feature>
<feature type="binding site" evidence="1">
    <location>
        <position position="8"/>
    </location>
    <ligand>
        <name>a divalent metal cation</name>
        <dbReference type="ChEBI" id="CHEBI:60240"/>
    </ligand>
</feature>
<feature type="binding site" evidence="1">
    <location>
        <position position="9"/>
    </location>
    <ligand>
        <name>a divalent metal cation</name>
        <dbReference type="ChEBI" id="CHEBI:60240"/>
    </ligand>
</feature>
<feature type="binding site" evidence="1">
    <location>
        <position position="40"/>
    </location>
    <ligand>
        <name>a divalent metal cation</name>
        <dbReference type="ChEBI" id="CHEBI:60240"/>
    </ligand>
</feature>
<feature type="binding site" evidence="1">
    <location>
        <position position="98"/>
    </location>
    <ligand>
        <name>a divalent metal cation</name>
        <dbReference type="ChEBI" id="CHEBI:60240"/>
    </ligand>
</feature>
<dbReference type="EC" id="3.1.3.5" evidence="1"/>
<dbReference type="EMBL" id="AP008231">
    <property type="protein sequence ID" value="BAD80220.1"/>
    <property type="molecule type" value="Genomic_DNA"/>
</dbReference>
<dbReference type="RefSeq" id="WP_011244340.1">
    <property type="nucleotide sequence ID" value="NZ_CP085785.1"/>
</dbReference>
<dbReference type="SMR" id="Q5N0F0"/>
<dbReference type="GeneID" id="72430939"/>
<dbReference type="KEGG" id="syc:syc2030_d"/>
<dbReference type="eggNOG" id="COG0496">
    <property type="taxonomic scope" value="Bacteria"/>
</dbReference>
<dbReference type="Proteomes" id="UP000001175">
    <property type="component" value="Chromosome"/>
</dbReference>
<dbReference type="GO" id="GO:0005737">
    <property type="term" value="C:cytoplasm"/>
    <property type="evidence" value="ECO:0007669"/>
    <property type="project" value="UniProtKB-SubCell"/>
</dbReference>
<dbReference type="GO" id="GO:0008254">
    <property type="term" value="F:3'-nucleotidase activity"/>
    <property type="evidence" value="ECO:0007669"/>
    <property type="project" value="TreeGrafter"/>
</dbReference>
<dbReference type="GO" id="GO:0008253">
    <property type="term" value="F:5'-nucleotidase activity"/>
    <property type="evidence" value="ECO:0007669"/>
    <property type="project" value="UniProtKB-UniRule"/>
</dbReference>
<dbReference type="GO" id="GO:0004309">
    <property type="term" value="F:exopolyphosphatase activity"/>
    <property type="evidence" value="ECO:0007669"/>
    <property type="project" value="TreeGrafter"/>
</dbReference>
<dbReference type="GO" id="GO:0046872">
    <property type="term" value="F:metal ion binding"/>
    <property type="evidence" value="ECO:0007669"/>
    <property type="project" value="UniProtKB-UniRule"/>
</dbReference>
<dbReference type="GO" id="GO:0000166">
    <property type="term" value="F:nucleotide binding"/>
    <property type="evidence" value="ECO:0007669"/>
    <property type="project" value="UniProtKB-KW"/>
</dbReference>
<dbReference type="FunFam" id="3.40.1210.10:FF:000001">
    <property type="entry name" value="5'/3'-nucleotidase SurE"/>
    <property type="match status" value="1"/>
</dbReference>
<dbReference type="Gene3D" id="3.40.1210.10">
    <property type="entry name" value="Survival protein SurE-like phosphatase/nucleotidase"/>
    <property type="match status" value="1"/>
</dbReference>
<dbReference type="HAMAP" id="MF_00060">
    <property type="entry name" value="SurE"/>
    <property type="match status" value="1"/>
</dbReference>
<dbReference type="InterPro" id="IPR030048">
    <property type="entry name" value="SurE"/>
</dbReference>
<dbReference type="InterPro" id="IPR002828">
    <property type="entry name" value="SurE-like_Pase/nucleotidase"/>
</dbReference>
<dbReference type="InterPro" id="IPR036523">
    <property type="entry name" value="SurE-like_sf"/>
</dbReference>
<dbReference type="NCBIfam" id="NF001490">
    <property type="entry name" value="PRK00346.1-4"/>
    <property type="match status" value="1"/>
</dbReference>
<dbReference type="NCBIfam" id="NF001492">
    <property type="entry name" value="PRK00346.2-2"/>
    <property type="match status" value="1"/>
</dbReference>
<dbReference type="NCBIfam" id="TIGR00087">
    <property type="entry name" value="surE"/>
    <property type="match status" value="1"/>
</dbReference>
<dbReference type="PANTHER" id="PTHR30457">
    <property type="entry name" value="5'-NUCLEOTIDASE SURE"/>
    <property type="match status" value="1"/>
</dbReference>
<dbReference type="PANTHER" id="PTHR30457:SF12">
    <property type="entry name" value="5'_3'-NUCLEOTIDASE SURE"/>
    <property type="match status" value="1"/>
</dbReference>
<dbReference type="Pfam" id="PF01975">
    <property type="entry name" value="SurE"/>
    <property type="match status" value="1"/>
</dbReference>
<dbReference type="SUPFAM" id="SSF64167">
    <property type="entry name" value="SurE-like"/>
    <property type="match status" value="1"/>
</dbReference>
<sequence length="258" mass="28274">MRLLISNDDGVFALGIQTLANRLVQAGHEVTVVCPDRERSATGHGLTLHKPIRAERIEGLFDPAVQVWACSGTPSDCVKLALGTLLPELPDFVLSGINHGPNLGTDVLYSGTVSAAMEGVIEGIPSIALSLASFTARDFEPAAEIAVELLERLPHPSSPKVLLSVNIPPVPKEEIAGIRLTRQGVRRYVDLFDQRVDPRGKPYFWLAGEVVEESEPQEPADSHWCDVDAIRRNYVTVTPLQYDLTHYNSLSQLDHLSR</sequence>